<proteinExistence type="inferred from homology"/>
<name>ATPF_CLOBM</name>
<evidence type="ECO:0000255" key="1">
    <source>
        <dbReference type="HAMAP-Rule" id="MF_01398"/>
    </source>
</evidence>
<dbReference type="EMBL" id="CP000962">
    <property type="protein sequence ID" value="ACA56478.1"/>
    <property type="molecule type" value="Genomic_DNA"/>
</dbReference>
<dbReference type="RefSeq" id="WP_012344344.1">
    <property type="nucleotide sequence ID" value="NC_010520.1"/>
</dbReference>
<dbReference type="SMR" id="B1KSS4"/>
<dbReference type="KEGG" id="cbl:CLK_3327"/>
<dbReference type="HOGENOM" id="CLU_079215_4_0_9"/>
<dbReference type="GO" id="GO:0005886">
    <property type="term" value="C:plasma membrane"/>
    <property type="evidence" value="ECO:0007669"/>
    <property type="project" value="UniProtKB-SubCell"/>
</dbReference>
<dbReference type="GO" id="GO:0045259">
    <property type="term" value="C:proton-transporting ATP synthase complex"/>
    <property type="evidence" value="ECO:0007669"/>
    <property type="project" value="UniProtKB-KW"/>
</dbReference>
<dbReference type="GO" id="GO:0046933">
    <property type="term" value="F:proton-transporting ATP synthase activity, rotational mechanism"/>
    <property type="evidence" value="ECO:0007669"/>
    <property type="project" value="UniProtKB-UniRule"/>
</dbReference>
<dbReference type="GO" id="GO:0046961">
    <property type="term" value="F:proton-transporting ATPase activity, rotational mechanism"/>
    <property type="evidence" value="ECO:0007669"/>
    <property type="project" value="TreeGrafter"/>
</dbReference>
<dbReference type="CDD" id="cd06503">
    <property type="entry name" value="ATP-synt_Fo_b"/>
    <property type="match status" value="1"/>
</dbReference>
<dbReference type="Gene3D" id="1.20.5.620">
    <property type="entry name" value="F1F0 ATP synthase subunit B, membrane domain"/>
    <property type="match status" value="1"/>
</dbReference>
<dbReference type="HAMAP" id="MF_01398">
    <property type="entry name" value="ATP_synth_b_bprime"/>
    <property type="match status" value="1"/>
</dbReference>
<dbReference type="InterPro" id="IPR028987">
    <property type="entry name" value="ATP_synth_B-like_membr_sf"/>
</dbReference>
<dbReference type="InterPro" id="IPR002146">
    <property type="entry name" value="ATP_synth_b/b'su_bac/chlpt"/>
</dbReference>
<dbReference type="InterPro" id="IPR005864">
    <property type="entry name" value="ATP_synth_F0_bsu_bac"/>
</dbReference>
<dbReference type="InterPro" id="IPR050059">
    <property type="entry name" value="ATP_synthase_B_chain"/>
</dbReference>
<dbReference type="NCBIfam" id="TIGR01144">
    <property type="entry name" value="ATP_synt_b"/>
    <property type="match status" value="1"/>
</dbReference>
<dbReference type="NCBIfam" id="NF009992">
    <property type="entry name" value="PRK13461.1"/>
    <property type="match status" value="1"/>
</dbReference>
<dbReference type="PANTHER" id="PTHR33445:SF1">
    <property type="entry name" value="ATP SYNTHASE SUBUNIT B"/>
    <property type="match status" value="1"/>
</dbReference>
<dbReference type="PANTHER" id="PTHR33445">
    <property type="entry name" value="ATP SYNTHASE SUBUNIT B', CHLOROPLASTIC"/>
    <property type="match status" value="1"/>
</dbReference>
<dbReference type="Pfam" id="PF00430">
    <property type="entry name" value="ATP-synt_B"/>
    <property type="match status" value="1"/>
</dbReference>
<dbReference type="SUPFAM" id="SSF81573">
    <property type="entry name" value="F1F0 ATP synthase subunit B, membrane domain"/>
    <property type="match status" value="1"/>
</dbReference>
<organism>
    <name type="scientific">Clostridium botulinum (strain Loch Maree / Type A3)</name>
    <dbReference type="NCBI Taxonomy" id="498214"/>
    <lineage>
        <taxon>Bacteria</taxon>
        <taxon>Bacillati</taxon>
        <taxon>Bacillota</taxon>
        <taxon>Clostridia</taxon>
        <taxon>Eubacteriales</taxon>
        <taxon>Clostridiaceae</taxon>
        <taxon>Clostridium</taxon>
    </lineage>
</organism>
<comment type="function">
    <text evidence="1">F(1)F(0) ATP synthase produces ATP from ADP in the presence of a proton or sodium gradient. F-type ATPases consist of two structural domains, F(1) containing the extramembraneous catalytic core and F(0) containing the membrane proton channel, linked together by a central stalk and a peripheral stalk. During catalysis, ATP synthesis in the catalytic domain of F(1) is coupled via a rotary mechanism of the central stalk subunits to proton translocation.</text>
</comment>
<comment type="function">
    <text evidence="1">Component of the F(0) channel, it forms part of the peripheral stalk, linking F(1) to F(0).</text>
</comment>
<comment type="subunit">
    <text evidence="1">F-type ATPases have 2 components, F(1) - the catalytic core - and F(0) - the membrane proton channel. F(1) has five subunits: alpha(3), beta(3), gamma(1), delta(1), epsilon(1). F(0) has three main subunits: a(1), b(2) and c(10-14). The alpha and beta chains form an alternating ring which encloses part of the gamma chain. F(1) is attached to F(0) by a central stalk formed by the gamma and epsilon chains, while a peripheral stalk is formed by the delta and b chains.</text>
</comment>
<comment type="subcellular location">
    <subcellularLocation>
        <location evidence="1">Cell membrane</location>
        <topology evidence="1">Single-pass membrane protein</topology>
    </subcellularLocation>
</comment>
<comment type="similarity">
    <text evidence="1">Belongs to the ATPase B chain family.</text>
</comment>
<protein>
    <recommendedName>
        <fullName evidence="1">ATP synthase subunit b</fullName>
    </recommendedName>
    <alternativeName>
        <fullName evidence="1">ATP synthase F(0) sector subunit b</fullName>
    </alternativeName>
    <alternativeName>
        <fullName evidence="1">ATPase subunit I</fullName>
    </alternativeName>
    <alternativeName>
        <fullName evidence="1">F-type ATPase subunit b</fullName>
        <shortName evidence="1">F-ATPase subunit b</shortName>
    </alternativeName>
</protein>
<accession>B1KSS4</accession>
<gene>
    <name evidence="1" type="primary">atpF</name>
    <name type="ordered locus">CLK_3327</name>
</gene>
<feature type="chain" id="PRO_0000368425" description="ATP synthase subunit b">
    <location>
        <begin position="1"/>
        <end position="159"/>
    </location>
</feature>
<feature type="transmembrane region" description="Helical" evidence="1">
    <location>
        <begin position="2"/>
        <end position="22"/>
    </location>
</feature>
<sequence>MNISIPQIIAAILNFIILLLIVKHFWFDKITAVVDSRQSEIINKIEDTDKNQKLALELKEKNELELGNAKKQGKTIVEEYKSKAENVYEDIVKEAHEEADRIIKKSRLEAERQKKNAEEEIRAEAVELAVLVSSKTLEKTIDDLEHRRLIKDFISKVGI</sequence>
<keyword id="KW-0066">ATP synthesis</keyword>
<keyword id="KW-1003">Cell membrane</keyword>
<keyword id="KW-0138">CF(0)</keyword>
<keyword id="KW-0375">Hydrogen ion transport</keyword>
<keyword id="KW-0406">Ion transport</keyword>
<keyword id="KW-0472">Membrane</keyword>
<keyword id="KW-0812">Transmembrane</keyword>
<keyword id="KW-1133">Transmembrane helix</keyword>
<keyword id="KW-0813">Transport</keyword>
<reference key="1">
    <citation type="journal article" date="2007" name="PLoS ONE">
        <title>Analysis of the neurotoxin complex genes in Clostridium botulinum A1-A4 and B1 strains: BoNT/A3, /Ba4 and /B1 clusters are located within plasmids.</title>
        <authorList>
            <person name="Smith T.J."/>
            <person name="Hill K.K."/>
            <person name="Foley B.T."/>
            <person name="Detter J.C."/>
            <person name="Munk A.C."/>
            <person name="Bruce D.C."/>
            <person name="Doggett N.A."/>
            <person name="Smith L.A."/>
            <person name="Marks J.D."/>
            <person name="Xie G."/>
            <person name="Brettin T.S."/>
        </authorList>
    </citation>
    <scope>NUCLEOTIDE SEQUENCE [LARGE SCALE GENOMIC DNA]</scope>
    <source>
        <strain>Loch Maree / Type A3</strain>
    </source>
</reference>